<reference key="1">
    <citation type="journal article" date="2007" name="Genome Biol.">
        <title>Characterization and modeling of the Haemophilus influenzae core and supragenomes based on the complete genomic sequences of Rd and 12 clinical nontypeable strains.</title>
        <authorList>
            <person name="Hogg J.S."/>
            <person name="Hu F.Z."/>
            <person name="Janto B."/>
            <person name="Boissy R."/>
            <person name="Hayes J."/>
            <person name="Keefe R."/>
            <person name="Post J.C."/>
            <person name="Ehrlich G.D."/>
        </authorList>
    </citation>
    <scope>NUCLEOTIDE SEQUENCE [LARGE SCALE GENOMIC DNA]</scope>
    <source>
        <strain>PittGG</strain>
    </source>
</reference>
<sequence length="173" mass="19152">MNPRRKSRFKLVIFVVLGIAIASGLMLYALRQNIDLFYTPSEVIQGKDNNPNQKPEVGQRIRVGGMVVEGTVVRDPKSLKVRFDLNDIGPAITVEYEGILPDLFREGQGIVAQGVLTQSAVLSATEVLAKHDENYVPPELGEKMQKVHKPMGIKAADLKGESERDRQEKEGAK</sequence>
<proteinExistence type="inferred from homology"/>
<gene>
    <name evidence="1" type="primary">ccmE</name>
    <name evidence="1" type="synonym">cycJ</name>
    <name type="ordered locus">CGSHiGG_09105</name>
</gene>
<name>CCME_HAEIG</name>
<protein>
    <recommendedName>
        <fullName evidence="1">Cytochrome c-type biogenesis protein CcmE</fullName>
    </recommendedName>
    <alternativeName>
        <fullName evidence="1">Cytochrome c maturation protein E</fullName>
    </alternativeName>
    <alternativeName>
        <fullName evidence="1">Heme chaperone CcmE</fullName>
    </alternativeName>
</protein>
<keyword id="KW-0997">Cell inner membrane</keyword>
<keyword id="KW-1003">Cell membrane</keyword>
<keyword id="KW-0201">Cytochrome c-type biogenesis</keyword>
<keyword id="KW-0349">Heme</keyword>
<keyword id="KW-0408">Iron</keyword>
<keyword id="KW-0472">Membrane</keyword>
<keyword id="KW-0479">Metal-binding</keyword>
<keyword id="KW-0735">Signal-anchor</keyword>
<keyword id="KW-0812">Transmembrane</keyword>
<keyword id="KW-1133">Transmembrane helix</keyword>
<accession>A5UIL9</accession>
<dbReference type="EMBL" id="CP000672">
    <property type="protein sequence ID" value="ABR00625.1"/>
    <property type="molecule type" value="Genomic_DNA"/>
</dbReference>
<dbReference type="SMR" id="A5UIL9"/>
<dbReference type="KEGG" id="hiq:CGSHiGG_09105"/>
<dbReference type="HOGENOM" id="CLU_079503_1_0_6"/>
<dbReference type="Proteomes" id="UP000001990">
    <property type="component" value="Chromosome"/>
</dbReference>
<dbReference type="GO" id="GO:0005886">
    <property type="term" value="C:plasma membrane"/>
    <property type="evidence" value="ECO:0007669"/>
    <property type="project" value="UniProtKB-SubCell"/>
</dbReference>
<dbReference type="GO" id="GO:0020037">
    <property type="term" value="F:heme binding"/>
    <property type="evidence" value="ECO:0007669"/>
    <property type="project" value="InterPro"/>
</dbReference>
<dbReference type="GO" id="GO:0046872">
    <property type="term" value="F:metal ion binding"/>
    <property type="evidence" value="ECO:0007669"/>
    <property type="project" value="UniProtKB-KW"/>
</dbReference>
<dbReference type="GO" id="GO:0017004">
    <property type="term" value="P:cytochrome complex assembly"/>
    <property type="evidence" value="ECO:0007669"/>
    <property type="project" value="UniProtKB-KW"/>
</dbReference>
<dbReference type="FunFam" id="2.40.50.140:FF:000104">
    <property type="entry name" value="Cytochrome c-type biogenesis protein CcmE"/>
    <property type="match status" value="1"/>
</dbReference>
<dbReference type="Gene3D" id="2.40.50.140">
    <property type="entry name" value="Nucleic acid-binding proteins"/>
    <property type="match status" value="1"/>
</dbReference>
<dbReference type="HAMAP" id="MF_01959">
    <property type="entry name" value="CcmE"/>
    <property type="match status" value="1"/>
</dbReference>
<dbReference type="InterPro" id="IPR004329">
    <property type="entry name" value="CcmE"/>
</dbReference>
<dbReference type="InterPro" id="IPR036127">
    <property type="entry name" value="CcmE-like_sf"/>
</dbReference>
<dbReference type="InterPro" id="IPR012340">
    <property type="entry name" value="NA-bd_OB-fold"/>
</dbReference>
<dbReference type="NCBIfam" id="NF009638">
    <property type="entry name" value="PRK13165.1"/>
    <property type="match status" value="1"/>
</dbReference>
<dbReference type="NCBIfam" id="NF009727">
    <property type="entry name" value="PRK13254.1-1"/>
    <property type="match status" value="1"/>
</dbReference>
<dbReference type="NCBIfam" id="NF009729">
    <property type="entry name" value="PRK13254.1-3"/>
    <property type="match status" value="1"/>
</dbReference>
<dbReference type="PANTHER" id="PTHR34128">
    <property type="entry name" value="CYTOCHROME C-TYPE BIOGENESIS PROTEIN CCME HOMOLOG, MITOCHONDRIAL"/>
    <property type="match status" value="1"/>
</dbReference>
<dbReference type="PANTHER" id="PTHR34128:SF2">
    <property type="entry name" value="CYTOCHROME C-TYPE BIOGENESIS PROTEIN CCME HOMOLOG, MITOCHONDRIAL"/>
    <property type="match status" value="1"/>
</dbReference>
<dbReference type="Pfam" id="PF03100">
    <property type="entry name" value="CcmE"/>
    <property type="match status" value="1"/>
</dbReference>
<dbReference type="SUPFAM" id="SSF82093">
    <property type="entry name" value="Heme chaperone CcmE"/>
    <property type="match status" value="1"/>
</dbReference>
<feature type="chain" id="PRO_1000070816" description="Cytochrome c-type biogenesis protein CcmE">
    <location>
        <begin position="1"/>
        <end position="173"/>
    </location>
</feature>
<feature type="topological domain" description="Cytoplasmic" evidence="1">
    <location>
        <begin position="1"/>
        <end position="8"/>
    </location>
</feature>
<feature type="transmembrane region" description="Helical; Signal-anchor for type II membrane protein" evidence="1">
    <location>
        <begin position="9"/>
        <end position="29"/>
    </location>
</feature>
<feature type="topological domain" description="Periplasmic" evidence="1">
    <location>
        <begin position="30"/>
        <end position="173"/>
    </location>
</feature>
<feature type="region of interest" description="Disordered" evidence="2">
    <location>
        <begin position="139"/>
        <end position="173"/>
    </location>
</feature>
<feature type="compositionally biased region" description="Basic and acidic residues" evidence="2">
    <location>
        <begin position="156"/>
        <end position="173"/>
    </location>
</feature>
<feature type="binding site" description="covalent" evidence="1">
    <location>
        <position position="131"/>
    </location>
    <ligand>
        <name>heme</name>
        <dbReference type="ChEBI" id="CHEBI:30413"/>
    </ligand>
</feature>
<feature type="binding site" description="axial binding residue" evidence="1">
    <location>
        <position position="135"/>
    </location>
    <ligand>
        <name>heme</name>
        <dbReference type="ChEBI" id="CHEBI:30413"/>
    </ligand>
    <ligandPart>
        <name>Fe</name>
        <dbReference type="ChEBI" id="CHEBI:18248"/>
    </ligandPart>
</feature>
<comment type="function">
    <text evidence="1">Heme chaperone required for the biogenesis of c-type cytochromes. Transiently binds heme delivered by CcmC and transfers the heme to apo-cytochromes in a process facilitated by CcmF and CcmH.</text>
</comment>
<comment type="subcellular location">
    <subcellularLocation>
        <location evidence="1">Cell inner membrane</location>
        <topology evidence="1">Single-pass type II membrane protein</topology>
        <orientation evidence="1">Periplasmic side</orientation>
    </subcellularLocation>
</comment>
<comment type="similarity">
    <text evidence="1">Belongs to the CcmE/CycJ family.</text>
</comment>
<evidence type="ECO:0000255" key="1">
    <source>
        <dbReference type="HAMAP-Rule" id="MF_01959"/>
    </source>
</evidence>
<evidence type="ECO:0000256" key="2">
    <source>
        <dbReference type="SAM" id="MobiDB-lite"/>
    </source>
</evidence>
<organism>
    <name type="scientific">Haemophilus influenzae (strain PittGG)</name>
    <dbReference type="NCBI Taxonomy" id="374931"/>
    <lineage>
        <taxon>Bacteria</taxon>
        <taxon>Pseudomonadati</taxon>
        <taxon>Pseudomonadota</taxon>
        <taxon>Gammaproteobacteria</taxon>
        <taxon>Pasteurellales</taxon>
        <taxon>Pasteurellaceae</taxon>
        <taxon>Haemophilus</taxon>
    </lineage>
</organism>